<comment type="function">
    <text evidence="1">Catalyzes the conversion of D-ribulose 5-phosphate to formate and 3,4-dihydroxy-2-butanone 4-phosphate.</text>
</comment>
<comment type="catalytic activity">
    <reaction evidence="1">
        <text>D-ribulose 5-phosphate = (2S)-2-hydroxy-3-oxobutyl phosphate + formate + H(+)</text>
        <dbReference type="Rhea" id="RHEA:18457"/>
        <dbReference type="ChEBI" id="CHEBI:15378"/>
        <dbReference type="ChEBI" id="CHEBI:15740"/>
        <dbReference type="ChEBI" id="CHEBI:58121"/>
        <dbReference type="ChEBI" id="CHEBI:58830"/>
        <dbReference type="EC" id="4.1.99.12"/>
    </reaction>
</comment>
<comment type="cofactor">
    <cofactor evidence="1">
        <name>Mg(2+)</name>
        <dbReference type="ChEBI" id="CHEBI:18420"/>
    </cofactor>
    <cofactor evidence="1">
        <name>Mn(2+)</name>
        <dbReference type="ChEBI" id="CHEBI:29035"/>
    </cofactor>
    <text evidence="1">Binds 2 divalent metal cations per subunit. Magnesium or manganese.</text>
</comment>
<comment type="pathway">
    <text evidence="1">Cofactor biosynthesis; riboflavin biosynthesis; 2-hydroxy-3-oxobutyl phosphate from D-ribulose 5-phosphate: step 1/1.</text>
</comment>
<comment type="subunit">
    <text evidence="1">Homodimer.</text>
</comment>
<comment type="similarity">
    <text evidence="1">Belongs to the DHBP synthase family.</text>
</comment>
<sequence length="217" mass="23360">MNQTLLSDFGTPVERVERAIDALRNGRGVMVLDDESRENEGDMVFAAEAMTLEQMALTIRHGSGIVCLCITDERRQQLDLPMMVTHNSSQFQTAFTVTIEAAEGVTTGVSAADRLTTIRKAIADNAKPADLNRPGHVFPLRGQPGGVLSRRGHTEASIDLATLAGYKPAGVLCELTNDDGSMAHAPEVIAFAKLHDMPVVTIDDLAAYLQSRAKKAS</sequence>
<keyword id="KW-0456">Lyase</keyword>
<keyword id="KW-0460">Magnesium</keyword>
<keyword id="KW-0464">Manganese</keyword>
<keyword id="KW-0479">Metal-binding</keyword>
<keyword id="KW-0686">Riboflavin biosynthesis</keyword>
<gene>
    <name evidence="1" type="primary">ribB</name>
    <name type="ordered locus">YpsIP31758_0567</name>
</gene>
<evidence type="ECO:0000255" key="1">
    <source>
        <dbReference type="HAMAP-Rule" id="MF_00180"/>
    </source>
</evidence>
<dbReference type="EC" id="4.1.99.12" evidence="1"/>
<dbReference type="EMBL" id="CP000720">
    <property type="protein sequence ID" value="ABS49333.1"/>
    <property type="molecule type" value="Genomic_DNA"/>
</dbReference>
<dbReference type="RefSeq" id="WP_002212190.1">
    <property type="nucleotide sequence ID" value="NC_009708.1"/>
</dbReference>
<dbReference type="SMR" id="A7FE82"/>
<dbReference type="GeneID" id="57973967"/>
<dbReference type="KEGG" id="ypi:YpsIP31758_0567"/>
<dbReference type="HOGENOM" id="CLU_020273_3_0_6"/>
<dbReference type="UniPathway" id="UPA00275">
    <property type="reaction ID" value="UER00399"/>
</dbReference>
<dbReference type="Proteomes" id="UP000002412">
    <property type="component" value="Chromosome"/>
</dbReference>
<dbReference type="GO" id="GO:0005829">
    <property type="term" value="C:cytosol"/>
    <property type="evidence" value="ECO:0007669"/>
    <property type="project" value="TreeGrafter"/>
</dbReference>
<dbReference type="GO" id="GO:0008686">
    <property type="term" value="F:3,4-dihydroxy-2-butanone-4-phosphate synthase activity"/>
    <property type="evidence" value="ECO:0007669"/>
    <property type="project" value="UniProtKB-UniRule"/>
</dbReference>
<dbReference type="GO" id="GO:0000287">
    <property type="term" value="F:magnesium ion binding"/>
    <property type="evidence" value="ECO:0007669"/>
    <property type="project" value="UniProtKB-UniRule"/>
</dbReference>
<dbReference type="GO" id="GO:0030145">
    <property type="term" value="F:manganese ion binding"/>
    <property type="evidence" value="ECO:0007669"/>
    <property type="project" value="UniProtKB-UniRule"/>
</dbReference>
<dbReference type="GO" id="GO:0009231">
    <property type="term" value="P:riboflavin biosynthetic process"/>
    <property type="evidence" value="ECO:0007669"/>
    <property type="project" value="UniProtKB-UniRule"/>
</dbReference>
<dbReference type="FunFam" id="3.90.870.10:FF:000002">
    <property type="entry name" value="3,4-dihydroxy-2-butanone 4-phosphate synthase"/>
    <property type="match status" value="1"/>
</dbReference>
<dbReference type="Gene3D" id="3.90.870.10">
    <property type="entry name" value="DHBP synthase"/>
    <property type="match status" value="1"/>
</dbReference>
<dbReference type="HAMAP" id="MF_00180">
    <property type="entry name" value="RibB"/>
    <property type="match status" value="1"/>
</dbReference>
<dbReference type="InterPro" id="IPR017945">
    <property type="entry name" value="DHBP_synth_RibB-like_a/b_dom"/>
</dbReference>
<dbReference type="InterPro" id="IPR000422">
    <property type="entry name" value="DHBP_synthase_RibB"/>
</dbReference>
<dbReference type="NCBIfam" id="TIGR00506">
    <property type="entry name" value="ribB"/>
    <property type="match status" value="1"/>
</dbReference>
<dbReference type="PANTHER" id="PTHR21327:SF38">
    <property type="entry name" value="3,4-DIHYDROXY-2-BUTANONE 4-PHOSPHATE SYNTHASE"/>
    <property type="match status" value="1"/>
</dbReference>
<dbReference type="PANTHER" id="PTHR21327">
    <property type="entry name" value="GTP CYCLOHYDROLASE II-RELATED"/>
    <property type="match status" value="1"/>
</dbReference>
<dbReference type="Pfam" id="PF00926">
    <property type="entry name" value="DHBP_synthase"/>
    <property type="match status" value="1"/>
</dbReference>
<dbReference type="SUPFAM" id="SSF55821">
    <property type="entry name" value="YrdC/RibB"/>
    <property type="match status" value="1"/>
</dbReference>
<reference key="1">
    <citation type="journal article" date="2007" name="PLoS Genet.">
        <title>The complete genome sequence of Yersinia pseudotuberculosis IP31758, the causative agent of Far East scarlet-like fever.</title>
        <authorList>
            <person name="Eppinger M."/>
            <person name="Rosovitz M.J."/>
            <person name="Fricke W.F."/>
            <person name="Rasko D.A."/>
            <person name="Kokorina G."/>
            <person name="Fayolle C."/>
            <person name="Lindler L.E."/>
            <person name="Carniel E."/>
            <person name="Ravel J."/>
        </authorList>
    </citation>
    <scope>NUCLEOTIDE SEQUENCE [LARGE SCALE GENOMIC DNA]</scope>
    <source>
        <strain>IP 31758</strain>
    </source>
</reference>
<accession>A7FE82</accession>
<feature type="chain" id="PRO_1000058382" description="3,4-dihydroxy-2-butanone 4-phosphate synthase">
    <location>
        <begin position="1"/>
        <end position="217"/>
    </location>
</feature>
<feature type="binding site" evidence="1">
    <location>
        <begin position="37"/>
        <end position="38"/>
    </location>
    <ligand>
        <name>D-ribulose 5-phosphate</name>
        <dbReference type="ChEBI" id="CHEBI:58121"/>
    </ligand>
</feature>
<feature type="binding site" evidence="1">
    <location>
        <position position="38"/>
    </location>
    <ligand>
        <name>Mg(2+)</name>
        <dbReference type="ChEBI" id="CHEBI:18420"/>
        <label>1</label>
    </ligand>
</feature>
<feature type="binding site" evidence="1">
    <location>
        <position position="38"/>
    </location>
    <ligand>
        <name>Mg(2+)</name>
        <dbReference type="ChEBI" id="CHEBI:18420"/>
        <label>2</label>
    </ligand>
</feature>
<feature type="binding site" evidence="1">
    <location>
        <position position="42"/>
    </location>
    <ligand>
        <name>D-ribulose 5-phosphate</name>
        <dbReference type="ChEBI" id="CHEBI:58121"/>
    </ligand>
</feature>
<feature type="binding site" evidence="1">
    <location>
        <begin position="150"/>
        <end position="154"/>
    </location>
    <ligand>
        <name>D-ribulose 5-phosphate</name>
        <dbReference type="ChEBI" id="CHEBI:58121"/>
    </ligand>
</feature>
<feature type="binding site" evidence="1">
    <location>
        <position position="153"/>
    </location>
    <ligand>
        <name>Mg(2+)</name>
        <dbReference type="ChEBI" id="CHEBI:18420"/>
        <label>2</label>
    </ligand>
</feature>
<feature type="binding site" evidence="1">
    <location>
        <position position="174"/>
    </location>
    <ligand>
        <name>D-ribulose 5-phosphate</name>
        <dbReference type="ChEBI" id="CHEBI:58121"/>
    </ligand>
</feature>
<feature type="site" description="Essential for catalytic activity" evidence="1">
    <location>
        <position position="136"/>
    </location>
</feature>
<feature type="site" description="Essential for catalytic activity" evidence="1">
    <location>
        <position position="174"/>
    </location>
</feature>
<name>RIBB_YERP3</name>
<protein>
    <recommendedName>
        <fullName evidence="1">3,4-dihydroxy-2-butanone 4-phosphate synthase</fullName>
        <shortName evidence="1">DHBP synthase</shortName>
        <ecNumber evidence="1">4.1.99.12</ecNumber>
    </recommendedName>
</protein>
<proteinExistence type="inferred from homology"/>
<organism>
    <name type="scientific">Yersinia pseudotuberculosis serotype O:1b (strain IP 31758)</name>
    <dbReference type="NCBI Taxonomy" id="349747"/>
    <lineage>
        <taxon>Bacteria</taxon>
        <taxon>Pseudomonadati</taxon>
        <taxon>Pseudomonadota</taxon>
        <taxon>Gammaproteobacteria</taxon>
        <taxon>Enterobacterales</taxon>
        <taxon>Yersiniaceae</taxon>
        <taxon>Yersinia</taxon>
    </lineage>
</organism>